<feature type="chain" id="PRO_1000211811" description="Small ribosomal subunit protein uS19">
    <location>
        <begin position="1"/>
        <end position="94"/>
    </location>
</feature>
<feature type="region of interest" description="Disordered" evidence="2">
    <location>
        <begin position="73"/>
        <end position="94"/>
    </location>
</feature>
<sequence>MSRSKKKGPYVHPKLLKKIKEMNEKGEKKPIKTWSRASMVVPEMIGHTIAVYNGMKHIPVYITENMIGHRLGEFSPTRRFGGHADKKSKKGQVK</sequence>
<evidence type="ECO:0000255" key="1">
    <source>
        <dbReference type="HAMAP-Rule" id="MF_00531"/>
    </source>
</evidence>
<evidence type="ECO:0000256" key="2">
    <source>
        <dbReference type="SAM" id="MobiDB-lite"/>
    </source>
</evidence>
<evidence type="ECO:0000305" key="3"/>
<accession>C5CGR0</accession>
<organism>
    <name type="scientific">Kosmotoga olearia (strain ATCC BAA-1733 / DSM 21960 / TBF 19.5.1)</name>
    <dbReference type="NCBI Taxonomy" id="521045"/>
    <lineage>
        <taxon>Bacteria</taxon>
        <taxon>Thermotogati</taxon>
        <taxon>Thermotogota</taxon>
        <taxon>Thermotogae</taxon>
        <taxon>Kosmotogales</taxon>
        <taxon>Kosmotogaceae</taxon>
        <taxon>Kosmotoga</taxon>
    </lineage>
</organism>
<protein>
    <recommendedName>
        <fullName evidence="1">Small ribosomal subunit protein uS19</fullName>
    </recommendedName>
    <alternativeName>
        <fullName evidence="3">30S ribosomal protein S19</fullName>
    </alternativeName>
</protein>
<keyword id="KW-1185">Reference proteome</keyword>
<keyword id="KW-0687">Ribonucleoprotein</keyword>
<keyword id="KW-0689">Ribosomal protein</keyword>
<keyword id="KW-0694">RNA-binding</keyword>
<keyword id="KW-0699">rRNA-binding</keyword>
<reference key="1">
    <citation type="submission" date="2009-06" db="EMBL/GenBank/DDBJ databases">
        <title>Complete sequence of Thermotogales bacterium TBF 19.5.1.</title>
        <authorList>
            <consortium name="US DOE Joint Genome Institute"/>
            <person name="Lucas S."/>
            <person name="Copeland A."/>
            <person name="Lapidus A."/>
            <person name="Glavina del Rio T."/>
            <person name="Tice H."/>
            <person name="Bruce D."/>
            <person name="Goodwin L."/>
            <person name="Pitluck S."/>
            <person name="Chertkov O."/>
            <person name="Brettin T."/>
            <person name="Detter J.C."/>
            <person name="Han C."/>
            <person name="Schmutz J."/>
            <person name="Larimer F."/>
            <person name="Land M."/>
            <person name="Hauser L."/>
            <person name="Kyrpides N."/>
            <person name="Ovchinnikova G."/>
            <person name="Noll K."/>
        </authorList>
    </citation>
    <scope>NUCLEOTIDE SEQUENCE [LARGE SCALE GENOMIC DNA]</scope>
    <source>
        <strain>ATCC BAA-1733 / DSM 21960 / TBF 19.5.1</strain>
    </source>
</reference>
<comment type="function">
    <text evidence="1">Protein S19 forms a complex with S13 that binds strongly to the 16S ribosomal RNA.</text>
</comment>
<comment type="similarity">
    <text evidence="1">Belongs to the universal ribosomal protein uS19 family.</text>
</comment>
<dbReference type="EMBL" id="CP001634">
    <property type="protein sequence ID" value="ACR80579.1"/>
    <property type="molecule type" value="Genomic_DNA"/>
</dbReference>
<dbReference type="RefSeq" id="WP_015869222.1">
    <property type="nucleotide sequence ID" value="NC_012785.1"/>
</dbReference>
<dbReference type="SMR" id="C5CGR0"/>
<dbReference type="STRING" id="521045.Kole_1898"/>
<dbReference type="KEGG" id="kol:Kole_1898"/>
<dbReference type="eggNOG" id="COG0185">
    <property type="taxonomic scope" value="Bacteria"/>
</dbReference>
<dbReference type="HOGENOM" id="CLU_144911_0_1_0"/>
<dbReference type="OrthoDB" id="9797833at2"/>
<dbReference type="Proteomes" id="UP000002382">
    <property type="component" value="Chromosome"/>
</dbReference>
<dbReference type="GO" id="GO:0005737">
    <property type="term" value="C:cytoplasm"/>
    <property type="evidence" value="ECO:0007669"/>
    <property type="project" value="UniProtKB-ARBA"/>
</dbReference>
<dbReference type="GO" id="GO:0015935">
    <property type="term" value="C:small ribosomal subunit"/>
    <property type="evidence" value="ECO:0007669"/>
    <property type="project" value="InterPro"/>
</dbReference>
<dbReference type="GO" id="GO:0019843">
    <property type="term" value="F:rRNA binding"/>
    <property type="evidence" value="ECO:0007669"/>
    <property type="project" value="UniProtKB-UniRule"/>
</dbReference>
<dbReference type="GO" id="GO:0003735">
    <property type="term" value="F:structural constituent of ribosome"/>
    <property type="evidence" value="ECO:0007669"/>
    <property type="project" value="InterPro"/>
</dbReference>
<dbReference type="GO" id="GO:0000028">
    <property type="term" value="P:ribosomal small subunit assembly"/>
    <property type="evidence" value="ECO:0007669"/>
    <property type="project" value="TreeGrafter"/>
</dbReference>
<dbReference type="GO" id="GO:0006412">
    <property type="term" value="P:translation"/>
    <property type="evidence" value="ECO:0007669"/>
    <property type="project" value="UniProtKB-UniRule"/>
</dbReference>
<dbReference type="FunFam" id="3.30.860.10:FF:000001">
    <property type="entry name" value="30S ribosomal protein S19"/>
    <property type="match status" value="1"/>
</dbReference>
<dbReference type="Gene3D" id="3.30.860.10">
    <property type="entry name" value="30s Ribosomal Protein S19, Chain A"/>
    <property type="match status" value="1"/>
</dbReference>
<dbReference type="HAMAP" id="MF_00531">
    <property type="entry name" value="Ribosomal_uS19"/>
    <property type="match status" value="1"/>
</dbReference>
<dbReference type="InterPro" id="IPR002222">
    <property type="entry name" value="Ribosomal_uS19"/>
</dbReference>
<dbReference type="InterPro" id="IPR005732">
    <property type="entry name" value="Ribosomal_uS19_bac-type"/>
</dbReference>
<dbReference type="InterPro" id="IPR020934">
    <property type="entry name" value="Ribosomal_uS19_CS"/>
</dbReference>
<dbReference type="InterPro" id="IPR023575">
    <property type="entry name" value="Ribosomal_uS19_SF"/>
</dbReference>
<dbReference type="NCBIfam" id="TIGR01050">
    <property type="entry name" value="rpsS_bact"/>
    <property type="match status" value="1"/>
</dbReference>
<dbReference type="PANTHER" id="PTHR11880">
    <property type="entry name" value="RIBOSOMAL PROTEIN S19P FAMILY MEMBER"/>
    <property type="match status" value="1"/>
</dbReference>
<dbReference type="PANTHER" id="PTHR11880:SF8">
    <property type="entry name" value="SMALL RIBOSOMAL SUBUNIT PROTEIN US19M"/>
    <property type="match status" value="1"/>
</dbReference>
<dbReference type="Pfam" id="PF00203">
    <property type="entry name" value="Ribosomal_S19"/>
    <property type="match status" value="1"/>
</dbReference>
<dbReference type="PIRSF" id="PIRSF002144">
    <property type="entry name" value="Ribosomal_S19"/>
    <property type="match status" value="1"/>
</dbReference>
<dbReference type="PRINTS" id="PR00975">
    <property type="entry name" value="RIBOSOMALS19"/>
</dbReference>
<dbReference type="SUPFAM" id="SSF54570">
    <property type="entry name" value="Ribosomal protein S19"/>
    <property type="match status" value="1"/>
</dbReference>
<dbReference type="PROSITE" id="PS00323">
    <property type="entry name" value="RIBOSOMAL_S19"/>
    <property type="match status" value="1"/>
</dbReference>
<name>RS19_KOSOT</name>
<proteinExistence type="inferred from homology"/>
<gene>
    <name evidence="1" type="primary">rpsS</name>
    <name type="ordered locus">Kole_1898</name>
</gene>